<protein>
    <recommendedName>
        <fullName>Pertactin autotransporter</fullName>
    </recommendedName>
    <alternativeName>
        <fullName>P.94</fullName>
    </alternativeName>
    <component>
        <recommendedName>
            <fullName>Outer membrane protein P.68</fullName>
        </recommendedName>
    </component>
    <component>
        <recommendedName>
            <fullName>Pertactin translocator</fullName>
        </recommendedName>
    </component>
</protein>
<name>PERT_BORBR</name>
<gene>
    <name type="primary">prn</name>
    <name type="ordered locus">BB1366</name>
</gene>
<organism>
    <name type="scientific">Bordetella bronchiseptica (strain ATCC BAA-588 / NCTC 13252 / RB50)</name>
    <name type="common">Alcaligenes bronchisepticus</name>
    <dbReference type="NCBI Taxonomy" id="257310"/>
    <lineage>
        <taxon>Bacteria</taxon>
        <taxon>Pseudomonadati</taxon>
        <taxon>Pseudomonadota</taxon>
        <taxon>Betaproteobacteria</taxon>
        <taxon>Burkholderiales</taxon>
        <taxon>Alcaligenaceae</taxon>
        <taxon>Bordetella</taxon>
    </lineage>
</organism>
<comment type="function">
    <text>Agglutinogen that binds to eukaryotic cells; a process mediated by the R-G-D sequence. Pertactin may have a role in bacterial adhesion, and thus play a role in virulence. May contribute to the disease state of whooping cough.</text>
</comment>
<comment type="subunit">
    <text>Monomer.</text>
</comment>
<comment type="interaction">
    <interactant intactId="EBI-15556835">
        <id>Q03035</id>
    </interactant>
    <interactant intactId="EBI-15556799">
        <id>Q775D6</id>
        <label>mtd</label>
    </interactant>
    <organismsDiffer>true</organismsDiffer>
    <experiments>8</experiments>
</comment>
<comment type="subcellular location">
    <molecule>Pertactin autotransporter</molecule>
    <subcellularLocation>
        <location evidence="1">Periplasm</location>
    </subcellularLocation>
</comment>
<comment type="subcellular location">
    <molecule>Outer membrane protein P.68</molecule>
    <subcellularLocation>
        <location>Secreted</location>
    </subcellularLocation>
    <subcellularLocation>
        <location>Cell surface</location>
    </subcellularLocation>
</comment>
<comment type="subcellular location">
    <molecule>Pertactin translocator</molecule>
    <subcellularLocation>
        <location evidence="6">Cell outer membrane</location>
        <topology evidence="6">Multi-pass membrane protein</topology>
    </subcellularLocation>
    <text>The cleaved C-terminal fragment (autotransporter domain) is localized in the outer membrane.</text>
</comment>
<comment type="domain">
    <text evidence="1">The signal peptide, cleaved at the inner membrane, guides the autotransporter protein to the periplasmic space. Then, insertion of the C-terminal translocator domain in the outer membrane forms a hydrophilic pore for the translocation of the passenger domain to the bacterial cell surface, with subsequent cleavage (By similarity).</text>
</comment>
<comment type="miscellaneous">
    <text>Synthesized only in the presence of low Mg(2+) concentrations.</text>
</comment>
<evidence type="ECO:0000250" key="1"/>
<evidence type="ECO:0000255" key="2"/>
<evidence type="ECO:0000255" key="3">
    <source>
        <dbReference type="PROSITE-ProRule" id="PRU00556"/>
    </source>
</evidence>
<evidence type="ECO:0000256" key="4">
    <source>
        <dbReference type="SAM" id="MobiDB-lite"/>
    </source>
</evidence>
<evidence type="ECO:0000269" key="5">
    <source>
    </source>
</evidence>
<evidence type="ECO:0000305" key="6"/>
<dbReference type="EMBL" id="X54815">
    <property type="protein sequence ID" value="CAA38584.1"/>
    <property type="molecule type" value="Genomic_DNA"/>
</dbReference>
<dbReference type="EMBL" id="BX640441">
    <property type="protein sequence ID" value="CAE31864.1"/>
    <property type="molecule type" value="Genomic_DNA"/>
</dbReference>
<dbReference type="PIR" id="A47675">
    <property type="entry name" value="A47675"/>
</dbReference>
<dbReference type="RefSeq" id="WP_010926141.1">
    <property type="nucleotide sequence ID" value="NC_002927.3"/>
</dbReference>
<dbReference type="PDB" id="2IOU">
    <property type="method" value="X-ray"/>
    <property type="resolution" value="3.16 A"/>
    <property type="chains" value="G/H=38-572"/>
</dbReference>
<dbReference type="PDBsum" id="2IOU"/>
<dbReference type="SMR" id="Q03035"/>
<dbReference type="DIP" id="DIP-46044N"/>
<dbReference type="IntAct" id="Q03035">
    <property type="interactions" value="1"/>
</dbReference>
<dbReference type="KEGG" id="bbr:BB1366"/>
<dbReference type="eggNOG" id="COG3468">
    <property type="taxonomic scope" value="Bacteria"/>
</dbReference>
<dbReference type="HOGENOM" id="CLU_002318_1_1_4"/>
<dbReference type="Proteomes" id="UP000001027">
    <property type="component" value="Chromosome"/>
</dbReference>
<dbReference type="GO" id="GO:0009279">
    <property type="term" value="C:cell outer membrane"/>
    <property type="evidence" value="ECO:0007669"/>
    <property type="project" value="UniProtKB-SubCell"/>
</dbReference>
<dbReference type="GO" id="GO:0009986">
    <property type="term" value="C:cell surface"/>
    <property type="evidence" value="ECO:0007669"/>
    <property type="project" value="UniProtKB-SubCell"/>
</dbReference>
<dbReference type="GO" id="GO:0005576">
    <property type="term" value="C:extracellular region"/>
    <property type="evidence" value="ECO:0007669"/>
    <property type="project" value="UniProtKB-SubCell"/>
</dbReference>
<dbReference type="GO" id="GO:0042597">
    <property type="term" value="C:periplasmic space"/>
    <property type="evidence" value="ECO:0007669"/>
    <property type="project" value="UniProtKB-SubCell"/>
</dbReference>
<dbReference type="GO" id="GO:0007155">
    <property type="term" value="P:cell adhesion"/>
    <property type="evidence" value="ECO:0007669"/>
    <property type="project" value="UniProtKB-KW"/>
</dbReference>
<dbReference type="CDD" id="cd01343">
    <property type="entry name" value="PL1_Passenger_AT"/>
    <property type="match status" value="1"/>
</dbReference>
<dbReference type="Gene3D" id="2.160.20.20">
    <property type="match status" value="1"/>
</dbReference>
<dbReference type="Gene3D" id="2.40.128.130">
    <property type="entry name" value="Autotransporter beta-domain"/>
    <property type="match status" value="1"/>
</dbReference>
<dbReference type="InterPro" id="IPR005546">
    <property type="entry name" value="Autotransporte_beta"/>
</dbReference>
<dbReference type="InterPro" id="IPR036709">
    <property type="entry name" value="Autotransporte_beta_dom_sf"/>
</dbReference>
<dbReference type="InterPro" id="IPR051551">
    <property type="entry name" value="Autotransporter_adhesion"/>
</dbReference>
<dbReference type="InterPro" id="IPR012332">
    <property type="entry name" value="Autotransporter_pectin_lyase_C"/>
</dbReference>
<dbReference type="InterPro" id="IPR006315">
    <property type="entry name" value="OM_autotransptr_brl_dom"/>
</dbReference>
<dbReference type="InterPro" id="IPR011050">
    <property type="entry name" value="Pectin_lyase_fold/virulence"/>
</dbReference>
<dbReference type="InterPro" id="IPR003992">
    <property type="entry name" value="Pertactin"/>
</dbReference>
<dbReference type="InterPro" id="IPR004899">
    <property type="entry name" value="Pertactin_central"/>
</dbReference>
<dbReference type="InterPro" id="IPR003991">
    <property type="entry name" value="Pertactin_virulence_factor"/>
</dbReference>
<dbReference type="NCBIfam" id="TIGR01414">
    <property type="entry name" value="autotrans_barl"/>
    <property type="match status" value="1"/>
</dbReference>
<dbReference type="PANTHER" id="PTHR35037">
    <property type="entry name" value="C-TERMINAL REGION OF AIDA-LIKE PROTEIN"/>
    <property type="match status" value="1"/>
</dbReference>
<dbReference type="PANTHER" id="PTHR35037:SF3">
    <property type="entry name" value="C-TERMINAL REGION OF AIDA-LIKE PROTEIN"/>
    <property type="match status" value="1"/>
</dbReference>
<dbReference type="Pfam" id="PF03797">
    <property type="entry name" value="Autotransporter"/>
    <property type="match status" value="1"/>
</dbReference>
<dbReference type="Pfam" id="PF03212">
    <property type="entry name" value="Pertactin"/>
    <property type="match status" value="1"/>
</dbReference>
<dbReference type="PRINTS" id="PR01482">
    <property type="entry name" value="PERTACTIN"/>
</dbReference>
<dbReference type="PRINTS" id="PR01484">
    <property type="entry name" value="PRTACTNFAMLY"/>
</dbReference>
<dbReference type="SMART" id="SM00869">
    <property type="entry name" value="Autotransporter"/>
    <property type="match status" value="1"/>
</dbReference>
<dbReference type="SUPFAM" id="SSF103515">
    <property type="entry name" value="Autotransporter"/>
    <property type="match status" value="1"/>
</dbReference>
<dbReference type="SUPFAM" id="SSF51126">
    <property type="entry name" value="Pectin lyase-like"/>
    <property type="match status" value="1"/>
</dbReference>
<dbReference type="PROSITE" id="PS51208">
    <property type="entry name" value="AUTOTRANSPORTER"/>
    <property type="match status" value="1"/>
</dbReference>
<feature type="signal peptide" evidence="5">
    <location>
        <begin position="1"/>
        <end position="37"/>
    </location>
</feature>
<feature type="chain" id="PRO_0000002702" description="Pertactin autotransporter">
    <location>
        <begin position="38"/>
        <end position="916"/>
    </location>
</feature>
<feature type="chain" id="PRO_0000002703" description="Outer membrane protein P.68">
    <location>
        <begin position="38"/>
        <end position="637"/>
    </location>
</feature>
<feature type="chain" id="PRO_0000002704" description="Pertactin translocator">
    <location>
        <begin position="638"/>
        <end position="916"/>
    </location>
</feature>
<feature type="repeat" description="1">
    <location>
        <begin position="269"/>
        <end position="273"/>
    </location>
</feature>
<feature type="repeat" description="2">
    <location>
        <begin position="274"/>
        <end position="278"/>
    </location>
</feature>
<feature type="repeat" description="3">
    <location>
        <begin position="279"/>
        <end position="283"/>
    </location>
</feature>
<feature type="repeat" description="4; approximate">
    <location>
        <begin position="284"/>
        <end position="288"/>
    </location>
</feature>
<feature type="domain" description="Autotransporter" evidence="3">
    <location>
        <begin position="648"/>
        <end position="916"/>
    </location>
</feature>
<feature type="region of interest" description="4 X 5 AA tandem repeats of G-G-A-V-P">
    <location>
        <begin position="269"/>
        <end position="288"/>
    </location>
</feature>
<feature type="region of interest" description="Disordered" evidence="4">
    <location>
        <begin position="564"/>
        <end position="613"/>
    </location>
</feature>
<feature type="region of interest" description="6 X 3 AA repeats of P-Q-P">
    <location>
        <begin position="578"/>
        <end position="606"/>
    </location>
</feature>
<feature type="short sequence motif" description="Cell attachment site; involved in adhesion to various eukaryotic cell lines">
    <location>
        <begin position="263"/>
        <end position="265"/>
    </location>
</feature>
<feature type="short sequence motif" description="Cell attachment site" evidence="2">
    <location>
        <begin position="706"/>
        <end position="708"/>
    </location>
</feature>
<feature type="compositionally biased region" description="Pro residues" evidence="4">
    <location>
        <begin position="571"/>
        <end position="607"/>
    </location>
</feature>
<feature type="site" description="Cleavage" evidence="1">
    <location>
        <begin position="637"/>
        <end position="638"/>
    </location>
</feature>
<feature type="sequence conflict" description="In Ref. 1; CAA38584." evidence="6" ref="1">
    <original>K</original>
    <variation>L</variation>
    <location>
        <position position="10"/>
    </location>
</feature>
<feature type="sequence conflict" description="In Ref. 1; AA sequence." evidence="6" ref="1">
    <location>
        <begin position="29"/>
        <end position="31"/>
    </location>
</feature>
<feature type="sequence conflict" description="In Ref. 1; CAA38584." evidence="6" ref="1">
    <original>H</original>
    <variation>Y</variation>
    <location>
        <position position="36"/>
    </location>
</feature>
<feature type="sequence conflict" description="In Ref. 1; AA sequence." evidence="6" ref="1">
    <location>
        <begin position="281"/>
        <end position="285"/>
    </location>
</feature>
<feature type="sequence conflict" description="In Ref. 1; CAA38584." evidence="6" ref="1">
    <original>V</original>
    <variation>C</variation>
    <location>
        <position position="471"/>
    </location>
</feature>
<feature type="sequence conflict" description="In Ref. 1; CAA38584." evidence="6" ref="1">
    <original>W</original>
    <variation>L</variation>
    <location>
        <position position="510"/>
    </location>
</feature>
<feature type="sequence conflict" description="In Ref. 1; CAA38584." evidence="6" ref="1">
    <original>A</original>
    <variation>G</variation>
    <location>
        <position position="521"/>
    </location>
</feature>
<feature type="sequence conflict" description="In Ref. 1; AA sequence." evidence="6" ref="1">
    <original>P</original>
    <variation>PQPP</variation>
    <location>
        <position position="595"/>
    </location>
</feature>
<feature type="sequence conflict" description="In Ref. 1; CAA38584." evidence="6" ref="1">
    <original>A</original>
    <variation>S</variation>
    <location>
        <position position="803"/>
    </location>
</feature>
<sequence>MNMSLSRIVKAAPLRRTTLAMALGALGALGAAPAAHADWNNQSIIKAGERQHGIHIKQSDGAGVRTATGTTIKVSGRQAQGVLLENPAAELRFQNGSVTSSGQLFDEGVRRFLGTVTVKAGKLVADHATLANVSDTRDDDGIALYVAGEQAQASIADSTLQGAGGVRVERGANVTVQRSTIVDGGLHIGTLQPLQPEDLPPSRVVLGDTSVTAVPASGAPAAVSVFGANELTVDGGHITGGRAAGVAAMDGAIVHLQRATIRRGDAPAGGAVPGGAVPGGAVPGGFGPLLDGWYGVDVSDSTVDLAQSIVEAPQLGAAIRAGRGARVTVSGGSLSAPHGNVIETGGGARRFPPPASPLSITLQAGARAQGRALLYRVLPEPVKLTLAGGAQGQGDIVATELPPIPGASSGPLDVALASQARWTGATRAVDSLSIDNATWVMTDNSNVGALRLASDGSVDFQQPAEAGRFKVLMVDTLAGSGLFRMNVFADLGLSDKLVVMRDASGQHRLWVRNSGSEPASANTMLLVQTPRGSAATFTLANKDGKVDIGTYRYRLAANGNGQWSLVGAKAPPAPKPAPQPGPQPGPQPPQPPQPPQRQPEAPAPQPPAGRELSAAANAAVNTGGVGLASTLWYAESNALSKRLGELRLNPDAGGAWGRGFAQRQQLDNRAGRRFDQKVAGFELGADHAVAVAGGRWHLGGLAGYTRGDRGFTGDGGGHTDSVHVGGYATYIANSGFYLDATLRASRLENDFKVAGSDGYAVKGKYRTHGVGASLEAGRRFAHADGWFLEPQAELAVFRVGGGAYRAANGLRVRDEGGSSVLGRLGLEVGKRIELAGGRQVQPYIKASVLQEFDGAGTVRTNGIAHRTELRGTRAELGLGMAAALGRGHSLYASYEYSKGPKLAMPWTFHAGYRYSW</sequence>
<reference key="1">
    <citation type="journal article" date="1992" name="J. Gen. Microbiol.">
        <title>Cloning, nucleotide sequence and heterologous expression of the protective outer-membrane protein P.68 pertactin from Bordetella bronchiseptica.</title>
        <authorList>
            <person name="Li J.L."/>
            <person name="Fairweather N.F."/>
            <person name="Novotny P."/>
            <person name="Dougan G."/>
            <person name="Charles I.G."/>
        </authorList>
    </citation>
    <scope>NUCLEOTIDE SEQUENCE [GENOMIC DNA]</scope>
    <scope>PROTEIN SEQUENCE OF 38-47</scope>
    <source>
        <strain>CN7531</strain>
    </source>
</reference>
<reference key="2">
    <citation type="journal article" date="2003" name="Nat. Genet.">
        <title>Comparative analysis of the genome sequences of Bordetella pertussis, Bordetella parapertussis and Bordetella bronchiseptica.</title>
        <authorList>
            <person name="Parkhill J."/>
            <person name="Sebaihia M."/>
            <person name="Preston A."/>
            <person name="Murphy L.D."/>
            <person name="Thomson N.R."/>
            <person name="Harris D.E."/>
            <person name="Holden M.T.G."/>
            <person name="Churcher C.M."/>
            <person name="Bentley S.D."/>
            <person name="Mungall K.L."/>
            <person name="Cerdeno-Tarraga A.-M."/>
            <person name="Temple L."/>
            <person name="James K.D."/>
            <person name="Harris B."/>
            <person name="Quail M.A."/>
            <person name="Achtman M."/>
            <person name="Atkin R."/>
            <person name="Baker S."/>
            <person name="Basham D."/>
            <person name="Bason N."/>
            <person name="Cherevach I."/>
            <person name="Chillingworth T."/>
            <person name="Collins M."/>
            <person name="Cronin A."/>
            <person name="Davis P."/>
            <person name="Doggett J."/>
            <person name="Feltwell T."/>
            <person name="Goble A."/>
            <person name="Hamlin N."/>
            <person name="Hauser H."/>
            <person name="Holroyd S."/>
            <person name="Jagels K."/>
            <person name="Leather S."/>
            <person name="Moule S."/>
            <person name="Norberczak H."/>
            <person name="O'Neil S."/>
            <person name="Ormond D."/>
            <person name="Price C."/>
            <person name="Rabbinowitsch E."/>
            <person name="Rutter S."/>
            <person name="Sanders M."/>
            <person name="Saunders D."/>
            <person name="Seeger K."/>
            <person name="Sharp S."/>
            <person name="Simmonds M."/>
            <person name="Skelton J."/>
            <person name="Squares R."/>
            <person name="Squares S."/>
            <person name="Stevens K."/>
            <person name="Unwin L."/>
            <person name="Whitehead S."/>
            <person name="Barrell B.G."/>
            <person name="Maskell D.J."/>
        </authorList>
    </citation>
    <scope>NUCLEOTIDE SEQUENCE [LARGE SCALE GENOMIC DNA]</scope>
    <source>
        <strain>ATCC BAA-588 / NCTC 13252 / RB50</strain>
    </source>
</reference>
<proteinExistence type="evidence at protein level"/>
<accession>Q03035</accession>
<keyword id="KW-0002">3D-structure</keyword>
<keyword id="KW-0130">Cell adhesion</keyword>
<keyword id="KW-0998">Cell outer membrane</keyword>
<keyword id="KW-0903">Direct protein sequencing</keyword>
<keyword id="KW-0472">Membrane</keyword>
<keyword id="KW-0574">Periplasm</keyword>
<keyword id="KW-0677">Repeat</keyword>
<keyword id="KW-0964">Secreted</keyword>
<keyword id="KW-0732">Signal</keyword>
<keyword id="KW-0812">Transmembrane</keyword>
<keyword id="KW-1134">Transmembrane beta strand</keyword>
<keyword id="KW-0843">Virulence</keyword>